<proteinExistence type="evidence at protein level"/>
<sequence length="898" mass="100148">MEWSSESAAVRRHRGTAERREGEAAASHRQREASAQEDAKGVGRMWGKTENGGGSRVAKTALSEARTALALALYLLALRALVQLSLQRLVLSRTSGLQGEFDARQARDYLEHITAIGPRTTGSTENEILTVQYLLEQIKLIEAQSNSLHSISVDIQRPTGSFSIDFLGGFTSYYDNITNVVVKLEPRDGAESAILANCHFDSVANSPGASDDAVSCAVMLEVLRVMSASPEPMQHAVVFLFNGAEENVLQASHGFITQHPWASLIRAFINLEAAGVGGKELVFQTGPENPWLVQAYVSAAKHPFASVVAQEVFQSGIIPSDTDFRIYRDFGNIPGIDLAFIENGYIYHTKYDTADRILIDSIQRAGDNILAVLKHLATSDTLASSSEYRHGSMVFFDVLGLLVIAYPSRVGSIINYMVVMAVVLYLGKKLLRPKHRNANYMRDFLCGLGITFISWFTSLVTVLIIAVFISLIGQSLSWYNYFYIAVCLYGTATVAKIIFIHTLAKRFYYMNASDLYLGELFFDTSLFVHCAFLVALTYQGFCSAFMSAVWVVFPLLTKLCVYKDFKKHGAQGRFVALYLLGMFIPYLYGLYLIWAVFEMFTPILGRSGSEIPPDVVLASILAVCVMILSSYFITFIYLVNSTKKTILTLILVCAVTFLLVCSGAFFPYSSNPESPKPKRVFLQHVSRTFHNLEGSVVKRDSGIWINGFDYTGMSHVTPHIPEINDTIRAHCEEDAPLCGFPWYLPVHFLIRKNWYLPAPEVSPRNPAHFRLVSKEKMPWDSIKLTFEATGPSHMSFYVRTHKGSTLSQWSLGNGIPVTSRGGDYFVFYSHGLQASAWRFWIEVQVSEEQAEGMVTVAIAAHYLSGENKRSSQLDALKKKFPDWSFPSAWVSTYSLFVF</sequence>
<keyword id="KW-0007">Acetylation</keyword>
<keyword id="KW-0025">Alternative splicing</keyword>
<keyword id="KW-1015">Disulfide bond</keyword>
<keyword id="KW-0256">Endoplasmic reticulum</keyword>
<keyword id="KW-0325">Glycoprotein</keyword>
<keyword id="KW-0378">Hydrolase</keyword>
<keyword id="KW-0472">Membrane</keyword>
<keyword id="KW-0479">Metal-binding</keyword>
<keyword id="KW-0482">Metalloprotease</keyword>
<keyword id="KW-0645">Protease</keyword>
<keyword id="KW-1185">Reference proteome</keyword>
<keyword id="KW-0812">Transmembrane</keyword>
<keyword id="KW-1133">Transmembrane helix</keyword>
<keyword id="KW-0862">Zinc</keyword>
<evidence type="ECO:0000250" key="1"/>
<evidence type="ECO:0000250" key="2">
    <source>
        <dbReference type="UniProtKB" id="P80561"/>
    </source>
</evidence>
<evidence type="ECO:0000250" key="3">
    <source>
        <dbReference type="UniProtKB" id="Q6UPR8"/>
    </source>
</evidence>
<evidence type="ECO:0000250" key="4">
    <source>
        <dbReference type="UniProtKB" id="Q7Z2K6"/>
    </source>
</evidence>
<evidence type="ECO:0000255" key="5"/>
<evidence type="ECO:0000255" key="6">
    <source>
        <dbReference type="PROSITE-ProRule" id="PRU00498"/>
    </source>
</evidence>
<evidence type="ECO:0000256" key="7">
    <source>
        <dbReference type="SAM" id="MobiDB-lite"/>
    </source>
</evidence>
<evidence type="ECO:0000303" key="8">
    <source>
    </source>
</evidence>
<evidence type="ECO:0000303" key="9">
    <source>
    </source>
</evidence>
<evidence type="ECO:0000305" key="10"/>
<reference key="1">
    <citation type="journal article" date="2005" name="Science">
        <title>The transcriptional landscape of the mammalian genome.</title>
        <authorList>
            <person name="Carninci P."/>
            <person name="Kasukawa T."/>
            <person name="Katayama S."/>
            <person name="Gough J."/>
            <person name="Frith M.C."/>
            <person name="Maeda N."/>
            <person name="Oyama R."/>
            <person name="Ravasi T."/>
            <person name="Lenhard B."/>
            <person name="Wells C."/>
            <person name="Kodzius R."/>
            <person name="Shimokawa K."/>
            <person name="Bajic V.B."/>
            <person name="Brenner S.E."/>
            <person name="Batalov S."/>
            <person name="Forrest A.R."/>
            <person name="Zavolan M."/>
            <person name="Davis M.J."/>
            <person name="Wilming L.G."/>
            <person name="Aidinis V."/>
            <person name="Allen J.E."/>
            <person name="Ambesi-Impiombato A."/>
            <person name="Apweiler R."/>
            <person name="Aturaliya R.N."/>
            <person name="Bailey T.L."/>
            <person name="Bansal M."/>
            <person name="Baxter L."/>
            <person name="Beisel K.W."/>
            <person name="Bersano T."/>
            <person name="Bono H."/>
            <person name="Chalk A.M."/>
            <person name="Chiu K.P."/>
            <person name="Choudhary V."/>
            <person name="Christoffels A."/>
            <person name="Clutterbuck D.R."/>
            <person name="Crowe M.L."/>
            <person name="Dalla E."/>
            <person name="Dalrymple B.P."/>
            <person name="de Bono B."/>
            <person name="Della Gatta G."/>
            <person name="di Bernardo D."/>
            <person name="Down T."/>
            <person name="Engstrom P."/>
            <person name="Fagiolini M."/>
            <person name="Faulkner G."/>
            <person name="Fletcher C.F."/>
            <person name="Fukushima T."/>
            <person name="Furuno M."/>
            <person name="Futaki S."/>
            <person name="Gariboldi M."/>
            <person name="Georgii-Hemming P."/>
            <person name="Gingeras T.R."/>
            <person name="Gojobori T."/>
            <person name="Green R.E."/>
            <person name="Gustincich S."/>
            <person name="Harbers M."/>
            <person name="Hayashi Y."/>
            <person name="Hensch T.K."/>
            <person name="Hirokawa N."/>
            <person name="Hill D."/>
            <person name="Huminiecki L."/>
            <person name="Iacono M."/>
            <person name="Ikeo K."/>
            <person name="Iwama A."/>
            <person name="Ishikawa T."/>
            <person name="Jakt M."/>
            <person name="Kanapin A."/>
            <person name="Katoh M."/>
            <person name="Kawasawa Y."/>
            <person name="Kelso J."/>
            <person name="Kitamura H."/>
            <person name="Kitano H."/>
            <person name="Kollias G."/>
            <person name="Krishnan S.P."/>
            <person name="Kruger A."/>
            <person name="Kummerfeld S.K."/>
            <person name="Kurochkin I.V."/>
            <person name="Lareau L.F."/>
            <person name="Lazarevic D."/>
            <person name="Lipovich L."/>
            <person name="Liu J."/>
            <person name="Liuni S."/>
            <person name="McWilliam S."/>
            <person name="Madan Babu M."/>
            <person name="Madera M."/>
            <person name="Marchionni L."/>
            <person name="Matsuda H."/>
            <person name="Matsuzawa S."/>
            <person name="Miki H."/>
            <person name="Mignone F."/>
            <person name="Miyake S."/>
            <person name="Morris K."/>
            <person name="Mottagui-Tabar S."/>
            <person name="Mulder N."/>
            <person name="Nakano N."/>
            <person name="Nakauchi H."/>
            <person name="Ng P."/>
            <person name="Nilsson R."/>
            <person name="Nishiguchi S."/>
            <person name="Nishikawa S."/>
            <person name="Nori F."/>
            <person name="Ohara O."/>
            <person name="Okazaki Y."/>
            <person name="Orlando V."/>
            <person name="Pang K.C."/>
            <person name="Pavan W.J."/>
            <person name="Pavesi G."/>
            <person name="Pesole G."/>
            <person name="Petrovsky N."/>
            <person name="Piazza S."/>
            <person name="Reed J."/>
            <person name="Reid J.F."/>
            <person name="Ring B.Z."/>
            <person name="Ringwald M."/>
            <person name="Rost B."/>
            <person name="Ruan Y."/>
            <person name="Salzberg S.L."/>
            <person name="Sandelin A."/>
            <person name="Schneider C."/>
            <person name="Schoenbach C."/>
            <person name="Sekiguchi K."/>
            <person name="Semple C.A."/>
            <person name="Seno S."/>
            <person name="Sessa L."/>
            <person name="Sheng Y."/>
            <person name="Shibata Y."/>
            <person name="Shimada H."/>
            <person name="Shimada K."/>
            <person name="Silva D."/>
            <person name="Sinclair B."/>
            <person name="Sperling S."/>
            <person name="Stupka E."/>
            <person name="Sugiura K."/>
            <person name="Sultana R."/>
            <person name="Takenaka Y."/>
            <person name="Taki K."/>
            <person name="Tammoja K."/>
            <person name="Tan S.L."/>
            <person name="Tang S."/>
            <person name="Taylor M.S."/>
            <person name="Tegner J."/>
            <person name="Teichmann S.A."/>
            <person name="Ueda H.R."/>
            <person name="van Nimwegen E."/>
            <person name="Verardo R."/>
            <person name="Wei C.L."/>
            <person name="Yagi K."/>
            <person name="Yamanishi H."/>
            <person name="Zabarovsky E."/>
            <person name="Zhu S."/>
            <person name="Zimmer A."/>
            <person name="Hide W."/>
            <person name="Bult C."/>
            <person name="Grimmond S.M."/>
            <person name="Teasdale R.D."/>
            <person name="Liu E.T."/>
            <person name="Brusic V."/>
            <person name="Quackenbush J."/>
            <person name="Wahlestedt C."/>
            <person name="Mattick J.S."/>
            <person name="Hume D.A."/>
            <person name="Kai C."/>
            <person name="Sasaki D."/>
            <person name="Tomaru Y."/>
            <person name="Fukuda S."/>
            <person name="Kanamori-Katayama M."/>
            <person name="Suzuki M."/>
            <person name="Aoki J."/>
            <person name="Arakawa T."/>
            <person name="Iida J."/>
            <person name="Imamura K."/>
            <person name="Itoh M."/>
            <person name="Kato T."/>
            <person name="Kawaji H."/>
            <person name="Kawagashira N."/>
            <person name="Kawashima T."/>
            <person name="Kojima M."/>
            <person name="Kondo S."/>
            <person name="Konno H."/>
            <person name="Nakano K."/>
            <person name="Ninomiya N."/>
            <person name="Nishio T."/>
            <person name="Okada M."/>
            <person name="Plessy C."/>
            <person name="Shibata K."/>
            <person name="Shiraki T."/>
            <person name="Suzuki S."/>
            <person name="Tagami M."/>
            <person name="Waki K."/>
            <person name="Watahiki A."/>
            <person name="Okamura-Oho Y."/>
            <person name="Suzuki H."/>
            <person name="Kawai J."/>
            <person name="Hayashizaki Y."/>
        </authorList>
    </citation>
    <scope>NUCLEOTIDE SEQUENCE [LARGE SCALE MRNA] (ISOFORMS 1 AND 2)</scope>
    <source>
        <strain>C57BL/6J</strain>
        <tissue>Embryonic head</tissue>
        <tissue>Thymus</tissue>
        <tissue>Urinary bladder</tissue>
    </source>
</reference>
<reference key="2">
    <citation type="journal article" date="2004" name="Genome Res.">
        <title>The status, quality, and expansion of the NIH full-length cDNA project: the Mammalian Gene Collection (MGC).</title>
        <authorList>
            <consortium name="The MGC Project Team"/>
        </authorList>
    </citation>
    <scope>NUCLEOTIDE SEQUENCE [LARGE SCALE MRNA] (ISOFORM 1)</scope>
    <source>
        <tissue>Brain</tissue>
    </source>
</reference>
<reference key="3">
    <citation type="journal article" date="2003" name="DNA Res.">
        <title>Prediction of the coding sequences of mouse homologues of KIAA gene: III. The complete nucleotide sequences of 500 mouse KIAA-homologous cDNAs identified by screening of terminal sequences of cDNA clones randomly sampled from size-fractionated libraries.</title>
        <authorList>
            <person name="Okazaki N."/>
            <person name="Kikuno R."/>
            <person name="Ohara R."/>
            <person name="Inamoto S."/>
            <person name="Koseki H."/>
            <person name="Hiraoka S."/>
            <person name="Saga Y."/>
            <person name="Nagase T."/>
            <person name="Ohara O."/>
            <person name="Koga H."/>
        </authorList>
    </citation>
    <scope>NUCLEOTIDE SEQUENCE [LARGE SCALE MRNA] OF 4-898 (ISOFORM 1)</scope>
</reference>
<reference key="4">
    <citation type="journal article" date="2010" name="Cell">
        <title>A tissue-specific atlas of mouse protein phosphorylation and expression.</title>
        <authorList>
            <person name="Huttlin E.L."/>
            <person name="Jedrychowski M.P."/>
            <person name="Elias J.E."/>
            <person name="Goswami T."/>
            <person name="Rad R."/>
            <person name="Beausoleil S.A."/>
            <person name="Villen J."/>
            <person name="Haas W."/>
            <person name="Sowa M.E."/>
            <person name="Gygi S.P."/>
        </authorList>
    </citation>
    <scope>IDENTIFICATION BY MASS SPECTROMETRY [LARGE SCALE ANALYSIS]</scope>
    <source>
        <tissue>Brain</tissue>
        <tissue>Brown adipose tissue</tissue>
        <tissue>Kidney</tissue>
        <tissue>Liver</tissue>
        <tissue>Lung</tissue>
        <tissue>Spleen</tissue>
        <tissue>Testis</tissue>
    </source>
</reference>
<protein>
    <recommendedName>
        <fullName evidence="3">Endoplasmic reticulum metallopeptidase 1</fullName>
        <ecNumber evidence="10">3.4.-.-</ecNumber>
    </recommendedName>
    <alternativeName>
        <fullName evidence="3">Felix-ina</fullName>
    </alternativeName>
</protein>
<dbReference type="EC" id="3.4.-.-" evidence="10"/>
<dbReference type="EMBL" id="AK037287">
    <property type="protein sequence ID" value="BAC29784.1"/>
    <property type="status" value="ALT_INIT"/>
    <property type="molecule type" value="mRNA"/>
</dbReference>
<dbReference type="EMBL" id="AK081674">
    <property type="protein sequence ID" value="BAC38286.1"/>
    <property type="status" value="ALT_INIT"/>
    <property type="molecule type" value="mRNA"/>
</dbReference>
<dbReference type="EMBL" id="AK137206">
    <property type="protein sequence ID" value="BAE23269.1"/>
    <property type="molecule type" value="mRNA"/>
</dbReference>
<dbReference type="EMBL" id="BC151181">
    <property type="protein sequence ID" value="AAI51182.1"/>
    <property type="molecule type" value="mRNA"/>
</dbReference>
<dbReference type="EMBL" id="BC151182">
    <property type="protein sequence ID" value="AAI51183.1"/>
    <property type="molecule type" value="mRNA"/>
</dbReference>
<dbReference type="EMBL" id="BC157914">
    <property type="protein sequence ID" value="AAI57915.1"/>
    <property type="molecule type" value="mRNA"/>
</dbReference>
<dbReference type="EMBL" id="AK129447">
    <property type="protein sequence ID" value="BAC98257.1"/>
    <property type="molecule type" value="mRNA"/>
</dbReference>
<dbReference type="CCDS" id="CCDS37952.1">
    <molecule id="Q3UVK0-1"/>
</dbReference>
<dbReference type="RefSeq" id="NP_001074682.1">
    <molecule id="Q3UVK0-1"/>
    <property type="nucleotide sequence ID" value="NM_001081213.2"/>
</dbReference>
<dbReference type="SMR" id="Q3UVK0"/>
<dbReference type="BioGRID" id="230469">
    <property type="interactions" value="2"/>
</dbReference>
<dbReference type="FunCoup" id="Q3UVK0">
    <property type="interactions" value="1046"/>
</dbReference>
<dbReference type="STRING" id="10090.ENSMUSP00000124881"/>
<dbReference type="MEROPS" id="M28.018"/>
<dbReference type="GlyConnect" id="2286">
    <property type="glycosylation" value="2 N-Linked glycans (1 site)"/>
</dbReference>
<dbReference type="GlyCosmos" id="Q3UVK0">
    <property type="glycosylation" value="2 sites, 2 glycans"/>
</dbReference>
<dbReference type="GlyGen" id="Q3UVK0">
    <property type="glycosylation" value="2 sites, 3 N-linked glycans (1 site)"/>
</dbReference>
<dbReference type="iPTMnet" id="Q3UVK0"/>
<dbReference type="PhosphoSitePlus" id="Q3UVK0"/>
<dbReference type="SwissPalm" id="Q3UVK0"/>
<dbReference type="jPOST" id="Q3UVK0"/>
<dbReference type="PaxDb" id="10090-ENSMUSP00000124881"/>
<dbReference type="PeptideAtlas" id="Q3UVK0"/>
<dbReference type="ProteomicsDB" id="275475">
    <molecule id="Q3UVK0-1"/>
</dbReference>
<dbReference type="ProteomicsDB" id="275476">
    <molecule id="Q3UVK0-2"/>
</dbReference>
<dbReference type="Pumba" id="Q3UVK0"/>
<dbReference type="Antibodypedia" id="54615">
    <property type="antibodies" value="150 antibodies from 24 providers"/>
</dbReference>
<dbReference type="DNASU" id="226090"/>
<dbReference type="Ensembl" id="ENSMUST00000159692.8">
    <molecule id="Q3UVK0-1"/>
    <property type="protein sequence ID" value="ENSMUSP00000124881.2"/>
    <property type="gene ID" value="ENSMUSG00000046324.13"/>
</dbReference>
<dbReference type="GeneID" id="226090"/>
<dbReference type="KEGG" id="mmu:226090"/>
<dbReference type="UCSC" id="uc008hdu.1">
    <molecule id="Q3UVK0-1"/>
    <property type="organism name" value="mouse"/>
</dbReference>
<dbReference type="UCSC" id="uc008hdw.1">
    <molecule id="Q3UVK0-2"/>
    <property type="organism name" value="mouse"/>
</dbReference>
<dbReference type="AGR" id="MGI:106250"/>
<dbReference type="CTD" id="79956"/>
<dbReference type="MGI" id="MGI:106250">
    <property type="gene designation" value="Ermp1"/>
</dbReference>
<dbReference type="VEuPathDB" id="HostDB:ENSMUSG00000046324"/>
<dbReference type="eggNOG" id="KOG2194">
    <property type="taxonomic scope" value="Eukaryota"/>
</dbReference>
<dbReference type="GeneTree" id="ENSGT00530000063839"/>
<dbReference type="HOGENOM" id="CLU_007536_2_0_1"/>
<dbReference type="InParanoid" id="Q3UVK0"/>
<dbReference type="OMA" id="WNNTIGA"/>
<dbReference type="OrthoDB" id="76293at2759"/>
<dbReference type="PhylomeDB" id="Q3UVK0"/>
<dbReference type="TreeFam" id="TF314836"/>
<dbReference type="BioGRID-ORCS" id="226090">
    <property type="hits" value="7 hits in 77 CRISPR screens"/>
</dbReference>
<dbReference type="ChiTaRS" id="Ermp1">
    <property type="organism name" value="mouse"/>
</dbReference>
<dbReference type="PRO" id="PR:Q3UVK0"/>
<dbReference type="Proteomes" id="UP000000589">
    <property type="component" value="Chromosome 19"/>
</dbReference>
<dbReference type="RNAct" id="Q3UVK0">
    <property type="molecule type" value="protein"/>
</dbReference>
<dbReference type="Bgee" id="ENSMUSG00000046324">
    <property type="expression patterns" value="Expressed in urinary bladder urothelium and 270 other cell types or tissues"/>
</dbReference>
<dbReference type="ExpressionAtlas" id="Q3UVK0">
    <property type="expression patterns" value="baseline and differential"/>
</dbReference>
<dbReference type="GO" id="GO:0005789">
    <property type="term" value="C:endoplasmic reticulum membrane"/>
    <property type="evidence" value="ECO:0007669"/>
    <property type="project" value="UniProtKB-SubCell"/>
</dbReference>
<dbReference type="GO" id="GO:0046872">
    <property type="term" value="F:metal ion binding"/>
    <property type="evidence" value="ECO:0007669"/>
    <property type="project" value="UniProtKB-KW"/>
</dbReference>
<dbReference type="GO" id="GO:0008235">
    <property type="term" value="F:metalloexopeptidase activity"/>
    <property type="evidence" value="ECO:0007669"/>
    <property type="project" value="InterPro"/>
</dbReference>
<dbReference type="GO" id="GO:0034599">
    <property type="term" value="P:cellular response to oxidative stress"/>
    <property type="evidence" value="ECO:0007669"/>
    <property type="project" value="Ensembl"/>
</dbReference>
<dbReference type="GO" id="GO:0030968">
    <property type="term" value="P:endoplasmic reticulum unfolded protein response"/>
    <property type="evidence" value="ECO:0007669"/>
    <property type="project" value="Ensembl"/>
</dbReference>
<dbReference type="GO" id="GO:0006508">
    <property type="term" value="P:proteolysis"/>
    <property type="evidence" value="ECO:0007669"/>
    <property type="project" value="UniProtKB-KW"/>
</dbReference>
<dbReference type="CDD" id="cd03875">
    <property type="entry name" value="M28_Fxna_like"/>
    <property type="match status" value="1"/>
</dbReference>
<dbReference type="FunFam" id="3.40.630.10:FF:000008">
    <property type="entry name" value="Endoplasmic reticulum metallopeptidase 1"/>
    <property type="match status" value="1"/>
</dbReference>
<dbReference type="Gene3D" id="3.40.630.10">
    <property type="entry name" value="Zn peptidases"/>
    <property type="match status" value="1"/>
</dbReference>
<dbReference type="InterPro" id="IPR053973">
    <property type="entry name" value="ERMP1-like_C"/>
</dbReference>
<dbReference type="InterPro" id="IPR053974">
    <property type="entry name" value="ERMP1_1-A_TM"/>
</dbReference>
<dbReference type="InterPro" id="IPR048024">
    <property type="entry name" value="Fxna-like_M28_dom"/>
</dbReference>
<dbReference type="InterPro" id="IPR045175">
    <property type="entry name" value="M28_fam"/>
</dbReference>
<dbReference type="InterPro" id="IPR007484">
    <property type="entry name" value="Peptidase_M28"/>
</dbReference>
<dbReference type="PANTHER" id="PTHR12147:SF22">
    <property type="entry name" value="ENDOPLASMIC RETICULUM METALLOPEPTIDASE 1"/>
    <property type="match status" value="1"/>
</dbReference>
<dbReference type="PANTHER" id="PTHR12147">
    <property type="entry name" value="METALLOPEPTIDASE M28 FAMILY MEMBER"/>
    <property type="match status" value="1"/>
</dbReference>
<dbReference type="Pfam" id="PF22249">
    <property type="entry name" value="ERMP1-TM"/>
    <property type="match status" value="1"/>
</dbReference>
<dbReference type="Pfam" id="PF22248">
    <property type="entry name" value="ERMP1_C"/>
    <property type="match status" value="1"/>
</dbReference>
<dbReference type="Pfam" id="PF04389">
    <property type="entry name" value="Peptidase_M28"/>
    <property type="match status" value="1"/>
</dbReference>
<dbReference type="SUPFAM" id="SSF53187">
    <property type="entry name" value="Zn-dependent exopeptidases"/>
    <property type="match status" value="1"/>
</dbReference>
<name>ERMP1_MOUSE</name>
<feature type="chain" id="PRO_0000259493" description="Endoplasmic reticulum metallopeptidase 1">
    <location>
        <begin position="1"/>
        <end position="898"/>
    </location>
</feature>
<feature type="topological domain" description="Cytoplasmic" evidence="10">
    <location>
        <begin position="1"/>
        <end position="66"/>
    </location>
</feature>
<feature type="transmembrane region" description="Helical; Name=1" evidence="5">
    <location>
        <begin position="67"/>
        <end position="87"/>
    </location>
</feature>
<feature type="topological domain" description="Lumenal" evidence="10">
    <location>
        <begin position="88"/>
        <end position="393"/>
    </location>
</feature>
<feature type="transmembrane region" description="Helical; Name=2" evidence="5">
    <location>
        <begin position="394"/>
        <end position="414"/>
    </location>
</feature>
<feature type="topological domain" description="Cytoplasmic" evidence="10">
    <location>
        <begin position="415"/>
        <end position="451"/>
    </location>
</feature>
<feature type="transmembrane region" description="Helical; Name=3" evidence="5">
    <location>
        <begin position="452"/>
        <end position="472"/>
    </location>
</feature>
<feature type="topological domain" description="Lumenal" evidence="10">
    <location>
        <begin position="473"/>
        <end position="480"/>
    </location>
</feature>
<feature type="transmembrane region" description="Helical; Name=4" evidence="5">
    <location>
        <begin position="481"/>
        <end position="501"/>
    </location>
</feature>
<feature type="topological domain" description="Cytoplasmic" evidence="10">
    <location>
        <begin position="502"/>
        <end position="515"/>
    </location>
</feature>
<feature type="transmembrane region" description="Helical; Name=5" evidence="5">
    <location>
        <begin position="516"/>
        <end position="538"/>
    </location>
</feature>
<feature type="topological domain" description="Lumenal" evidence="10">
    <location>
        <begin position="539"/>
        <end position="542"/>
    </location>
</feature>
<feature type="transmembrane region" description="Helical; Name=6" evidence="5">
    <location>
        <begin position="543"/>
        <end position="562"/>
    </location>
</feature>
<feature type="topological domain" description="Cytoplasmic" evidence="10">
    <location>
        <begin position="563"/>
        <end position="573"/>
    </location>
</feature>
<feature type="transmembrane region" description="Helical; Name=7" evidence="5">
    <location>
        <begin position="574"/>
        <end position="594"/>
    </location>
</feature>
<feature type="topological domain" description="Lumenal" evidence="10">
    <location>
        <begin position="595"/>
        <end position="615"/>
    </location>
</feature>
<feature type="transmembrane region" description="Helical; Name=8" evidence="5">
    <location>
        <begin position="616"/>
        <end position="636"/>
    </location>
</feature>
<feature type="topological domain" description="Cytoplasmic" evidence="10">
    <location>
        <begin position="637"/>
        <end position="645"/>
    </location>
</feature>
<feature type="transmembrane region" description="Helical; Name=9" evidence="5">
    <location>
        <begin position="646"/>
        <end position="666"/>
    </location>
</feature>
<feature type="topological domain" description="Lumenal" evidence="10">
    <location>
        <begin position="667"/>
        <end position="898"/>
    </location>
</feature>
<feature type="region of interest" description="Disordered" evidence="7">
    <location>
        <begin position="1"/>
        <end position="55"/>
    </location>
</feature>
<feature type="compositionally biased region" description="Basic and acidic residues" evidence="7">
    <location>
        <begin position="29"/>
        <end position="41"/>
    </location>
</feature>
<feature type="active site" description="Proton acceptor" evidence="2">
    <location>
        <position position="245"/>
    </location>
</feature>
<feature type="binding site" evidence="2">
    <location>
        <position position="199"/>
    </location>
    <ligand>
        <name>Zn(2+)</name>
        <dbReference type="ChEBI" id="CHEBI:29105"/>
        <label>1</label>
        <note>catalytic</note>
    </ligand>
</feature>
<feature type="binding site" evidence="2">
    <location>
        <position position="211"/>
    </location>
    <ligand>
        <name>Zn(2+)</name>
        <dbReference type="ChEBI" id="CHEBI:29105"/>
        <label>1</label>
        <note>catalytic</note>
    </ligand>
</feature>
<feature type="binding site" evidence="2">
    <location>
        <position position="211"/>
    </location>
    <ligand>
        <name>Zn(2+)</name>
        <dbReference type="ChEBI" id="CHEBI:29105"/>
        <label>2</label>
        <note>catalytic</note>
    </ligand>
</feature>
<feature type="binding site" evidence="2">
    <location>
        <position position="246"/>
    </location>
    <ligand>
        <name>Zn(2+)</name>
        <dbReference type="ChEBI" id="CHEBI:29105"/>
        <label>2</label>
        <note>catalytic</note>
    </ligand>
</feature>
<feature type="binding site" evidence="2">
    <location>
        <position position="272"/>
    </location>
    <ligand>
        <name>Zn(2+)</name>
        <dbReference type="ChEBI" id="CHEBI:29105"/>
        <label>1</label>
        <note>catalytic</note>
    </ligand>
</feature>
<feature type="binding site" evidence="2">
    <location>
        <position position="348"/>
    </location>
    <ligand>
        <name>Zn(2+)</name>
        <dbReference type="ChEBI" id="CHEBI:29105"/>
        <label>2</label>
        <note>catalytic</note>
    </ligand>
</feature>
<feature type="site" description="Transition state stabilizer" evidence="2">
    <location>
        <position position="347"/>
    </location>
</feature>
<feature type="modified residue" description="N-acetylmethionine" evidence="4">
    <location>
        <position position="1"/>
    </location>
</feature>
<feature type="glycosylation site" description="N-linked (GlcNAc...) asparagine" evidence="6">
    <location>
        <position position="176"/>
    </location>
</feature>
<feature type="glycosylation site" description="N-linked (GlcNAc...) asparagine" evidence="6">
    <location>
        <position position="724"/>
    </location>
</feature>
<feature type="disulfide bond" evidence="1">
    <location>
        <begin position="198"/>
        <end position="216"/>
    </location>
</feature>
<feature type="splice variant" id="VSP_021393" description="In isoform 2." evidence="9">
    <original>ASDDAVS</original>
    <variation>RYLYLVI</variation>
    <location>
        <begin position="209"/>
        <end position="215"/>
    </location>
</feature>
<feature type="splice variant" id="VSP_021394" description="In isoform 2." evidence="9">
    <location>
        <begin position="216"/>
        <end position="898"/>
    </location>
</feature>
<feature type="sequence conflict" description="In Ref. 1; BAE23269." evidence="10" ref="1">
    <original>Y</original>
    <variation>H</variation>
    <location>
        <position position="743"/>
    </location>
</feature>
<feature type="sequence conflict" description="In Ref. 1; BAC38286." evidence="10" ref="1">
    <original>F</original>
    <variation>S</variation>
    <location>
        <position position="880"/>
    </location>
</feature>
<gene>
    <name evidence="4" type="primary">Ermp1</name>
    <name type="synonym">D19Wsu12e</name>
    <name evidence="3" type="synonym">Fxna</name>
    <name evidence="8" type="synonym">Kiaa1815</name>
</gene>
<organism>
    <name type="scientific">Mus musculus</name>
    <name type="common">Mouse</name>
    <dbReference type="NCBI Taxonomy" id="10090"/>
    <lineage>
        <taxon>Eukaryota</taxon>
        <taxon>Metazoa</taxon>
        <taxon>Chordata</taxon>
        <taxon>Craniata</taxon>
        <taxon>Vertebrata</taxon>
        <taxon>Euteleostomi</taxon>
        <taxon>Mammalia</taxon>
        <taxon>Eutheria</taxon>
        <taxon>Euarchontoglires</taxon>
        <taxon>Glires</taxon>
        <taxon>Rodentia</taxon>
        <taxon>Myomorpha</taxon>
        <taxon>Muroidea</taxon>
        <taxon>Muridae</taxon>
        <taxon>Murinae</taxon>
        <taxon>Mus</taxon>
        <taxon>Mus</taxon>
    </lineage>
</organism>
<comment type="function">
    <text evidence="3">Within the ovary, required for the organization of somatic cells and oocytes into discrete follicular structures.</text>
</comment>
<comment type="cofactor">
    <cofactor evidence="2">
        <name>Zn(2+)</name>
        <dbReference type="ChEBI" id="CHEBI:29105"/>
    </cofactor>
    <text evidence="2">Binds 2 Zn(2+) ions per subunit.</text>
</comment>
<comment type="subcellular location">
    <subcellularLocation>
        <location evidence="3">Endoplasmic reticulum membrane</location>
        <topology evidence="5">Multi-pass membrane protein</topology>
    </subcellularLocation>
</comment>
<comment type="alternative products">
    <event type="alternative splicing"/>
    <isoform>
        <id>Q3UVK0-1</id>
        <name>1</name>
        <sequence type="displayed"/>
    </isoform>
    <isoform>
        <id>Q3UVK0-2</id>
        <name>2</name>
        <sequence type="described" ref="VSP_021393 VSP_021394"/>
    </isoform>
</comment>
<comment type="similarity">
    <text evidence="10">Belongs to the peptidase M28 family.</text>
</comment>
<comment type="sequence caution" evidence="10">
    <conflict type="erroneous initiation">
        <sequence resource="EMBL-CDS" id="BAC29784"/>
    </conflict>
</comment>
<comment type="sequence caution" evidence="10">
    <conflict type="erroneous initiation">
        <sequence resource="EMBL-CDS" id="BAC38286"/>
    </conflict>
</comment>
<accession>Q3UVK0</accession>
<accession>B2RXD6</accession>
<accession>Q6ZPH9</accession>
<accession>Q8BIW0</accession>
<accession>Q8BYX7</accession>